<reference key="1">
    <citation type="journal article" date="2008" name="J. Biotechnol.">
        <title>The lifestyle of Corynebacterium urealyticum derived from its complete genome sequence established by pyrosequencing.</title>
        <authorList>
            <person name="Tauch A."/>
            <person name="Trost E."/>
            <person name="Tilker A."/>
            <person name="Ludewig U."/>
            <person name="Schneiker S."/>
            <person name="Goesmann A."/>
            <person name="Arnold W."/>
            <person name="Bekel T."/>
            <person name="Brinkrolf K."/>
            <person name="Brune I."/>
            <person name="Goetker S."/>
            <person name="Kalinowski J."/>
            <person name="Kamp P.-B."/>
            <person name="Lobo F.P."/>
            <person name="Viehoever P."/>
            <person name="Weisshaar B."/>
            <person name="Soriano F."/>
            <person name="Droege M."/>
            <person name="Puehler A."/>
        </authorList>
    </citation>
    <scope>NUCLEOTIDE SEQUENCE [LARGE SCALE GENOMIC DNA]</scope>
    <source>
        <strain>ATCC 43042 / DSM 7109</strain>
    </source>
</reference>
<keyword id="KW-1185">Reference proteome</keyword>
<keyword id="KW-0687">Ribonucleoprotein</keyword>
<keyword id="KW-0689">Ribosomal protein</keyword>
<keyword id="KW-0694">RNA-binding</keyword>
<keyword id="KW-0699">rRNA-binding</keyword>
<gene>
    <name evidence="1" type="primary">rplJ</name>
    <name type="ordered locus">cu0297</name>
</gene>
<organism>
    <name type="scientific">Corynebacterium urealyticum (strain ATCC 43042 / DSM 7109)</name>
    <dbReference type="NCBI Taxonomy" id="504474"/>
    <lineage>
        <taxon>Bacteria</taxon>
        <taxon>Bacillati</taxon>
        <taxon>Actinomycetota</taxon>
        <taxon>Actinomycetes</taxon>
        <taxon>Mycobacteriales</taxon>
        <taxon>Corynebacteriaceae</taxon>
        <taxon>Corynebacterium</taxon>
    </lineage>
</organism>
<protein>
    <recommendedName>
        <fullName evidence="1">Large ribosomal subunit protein uL10</fullName>
    </recommendedName>
    <alternativeName>
        <fullName evidence="2">50S ribosomal protein L10</fullName>
    </alternativeName>
</protein>
<proteinExistence type="inferred from homology"/>
<comment type="function">
    <text evidence="1">Forms part of the ribosomal stalk, playing a central role in the interaction of the ribosome with GTP-bound translation factors.</text>
</comment>
<comment type="subunit">
    <text evidence="1">Part of the ribosomal stalk of the 50S ribosomal subunit. The N-terminus interacts with L11 and the large rRNA to form the base of the stalk. The C-terminus forms an elongated spine to which L12 dimers bind in a sequential fashion forming a multimeric L10(L12)X complex.</text>
</comment>
<comment type="similarity">
    <text evidence="1">Belongs to the universal ribosomal protein uL10 family.</text>
</comment>
<feature type="chain" id="PRO_1000120940" description="Large ribosomal subunit protein uL10">
    <location>
        <begin position="1"/>
        <end position="170"/>
    </location>
</feature>
<dbReference type="EMBL" id="AM942444">
    <property type="protein sequence ID" value="CAQ04257.1"/>
    <property type="molecule type" value="Genomic_DNA"/>
</dbReference>
<dbReference type="RefSeq" id="WP_012359558.1">
    <property type="nucleotide sequence ID" value="NC_010545.1"/>
</dbReference>
<dbReference type="SMR" id="B1VER8"/>
<dbReference type="STRING" id="504474.cu0297"/>
<dbReference type="GeneID" id="60605100"/>
<dbReference type="KEGG" id="cur:cu0297"/>
<dbReference type="eggNOG" id="COG0244">
    <property type="taxonomic scope" value="Bacteria"/>
</dbReference>
<dbReference type="HOGENOM" id="CLU_092227_1_0_11"/>
<dbReference type="Proteomes" id="UP000001727">
    <property type="component" value="Chromosome"/>
</dbReference>
<dbReference type="GO" id="GO:1990904">
    <property type="term" value="C:ribonucleoprotein complex"/>
    <property type="evidence" value="ECO:0007669"/>
    <property type="project" value="UniProtKB-KW"/>
</dbReference>
<dbReference type="GO" id="GO:0005840">
    <property type="term" value="C:ribosome"/>
    <property type="evidence" value="ECO:0007669"/>
    <property type="project" value="UniProtKB-KW"/>
</dbReference>
<dbReference type="GO" id="GO:0070180">
    <property type="term" value="F:large ribosomal subunit rRNA binding"/>
    <property type="evidence" value="ECO:0007669"/>
    <property type="project" value="UniProtKB-UniRule"/>
</dbReference>
<dbReference type="GO" id="GO:0006412">
    <property type="term" value="P:translation"/>
    <property type="evidence" value="ECO:0007669"/>
    <property type="project" value="UniProtKB-UniRule"/>
</dbReference>
<dbReference type="CDD" id="cd05797">
    <property type="entry name" value="Ribosomal_L10"/>
    <property type="match status" value="1"/>
</dbReference>
<dbReference type="Gene3D" id="3.30.70.1730">
    <property type="match status" value="1"/>
</dbReference>
<dbReference type="HAMAP" id="MF_00362">
    <property type="entry name" value="Ribosomal_uL10"/>
    <property type="match status" value="1"/>
</dbReference>
<dbReference type="InterPro" id="IPR001790">
    <property type="entry name" value="Ribosomal_uL10"/>
</dbReference>
<dbReference type="InterPro" id="IPR043141">
    <property type="entry name" value="Ribosomal_uL10-like_sf"/>
</dbReference>
<dbReference type="InterPro" id="IPR022973">
    <property type="entry name" value="Ribosomal_uL10_bac"/>
</dbReference>
<dbReference type="InterPro" id="IPR047865">
    <property type="entry name" value="Ribosomal_uL10_bac_type"/>
</dbReference>
<dbReference type="NCBIfam" id="NF000955">
    <property type="entry name" value="PRK00099.1-1"/>
    <property type="match status" value="1"/>
</dbReference>
<dbReference type="PANTHER" id="PTHR11560">
    <property type="entry name" value="39S RIBOSOMAL PROTEIN L10, MITOCHONDRIAL"/>
    <property type="match status" value="1"/>
</dbReference>
<dbReference type="Pfam" id="PF00466">
    <property type="entry name" value="Ribosomal_L10"/>
    <property type="match status" value="1"/>
</dbReference>
<dbReference type="SUPFAM" id="SSF160369">
    <property type="entry name" value="Ribosomal protein L10-like"/>
    <property type="match status" value="1"/>
</dbReference>
<name>RL10_CORU7</name>
<accession>B1VER8</accession>
<evidence type="ECO:0000255" key="1">
    <source>
        <dbReference type="HAMAP-Rule" id="MF_00362"/>
    </source>
</evidence>
<evidence type="ECO:0000305" key="2"/>
<sequence length="170" mass="17746">MANPKNTAALQELKARFEEADATVLTEYRGLSVVETTELRRALGQDVTYSVAKNTLLKLAAKEAGIEIDESLLTGPTAVAFIKGEAVDAAKAMKAFGKDHEAFVVKGGNMDGAALSAEQVMAIADLDNRETTLAKLAGALQGSLAKAAGLFNAPASQVARLAAALQEKKD</sequence>